<accession>Q45Z26</accession>
<organism>
    <name type="scientific">Tropidechis carinatus</name>
    <name type="common">Australian rough-scaled snake</name>
    <dbReference type="NCBI Taxonomy" id="100989"/>
    <lineage>
        <taxon>Eukaryota</taxon>
        <taxon>Metazoa</taxon>
        <taxon>Chordata</taxon>
        <taxon>Craniata</taxon>
        <taxon>Vertebrata</taxon>
        <taxon>Euteleostomi</taxon>
        <taxon>Lepidosauria</taxon>
        <taxon>Squamata</taxon>
        <taxon>Bifurcata</taxon>
        <taxon>Unidentata</taxon>
        <taxon>Episquamata</taxon>
        <taxon>Toxicofera</taxon>
        <taxon>Serpentes</taxon>
        <taxon>Colubroidea</taxon>
        <taxon>Elapidae</taxon>
        <taxon>Notechinae</taxon>
        <taxon>Tropidechis</taxon>
    </lineage>
</organism>
<feature type="signal peptide" evidence="2">
    <location>
        <begin position="1"/>
        <end position="27"/>
    </location>
</feature>
<feature type="chain" id="PRO_0000043280" description="Acidic phospholipase A2 5">
    <location>
        <begin position="28"/>
        <end position="151"/>
    </location>
</feature>
<feature type="active site" evidence="1">
    <location>
        <position position="75"/>
    </location>
</feature>
<feature type="active site" evidence="1">
    <location>
        <position position="126"/>
    </location>
</feature>
<feature type="binding site" evidence="1">
    <location>
        <position position="55"/>
    </location>
    <ligand>
        <name>Ca(2+)</name>
        <dbReference type="ChEBI" id="CHEBI:29108"/>
    </ligand>
</feature>
<feature type="binding site" evidence="1">
    <location>
        <position position="57"/>
    </location>
    <ligand>
        <name>Ca(2+)</name>
        <dbReference type="ChEBI" id="CHEBI:29108"/>
    </ligand>
</feature>
<feature type="binding site" evidence="1">
    <location>
        <position position="59"/>
    </location>
    <ligand>
        <name>Ca(2+)</name>
        <dbReference type="ChEBI" id="CHEBI:29108"/>
    </ligand>
</feature>
<feature type="binding site" evidence="1">
    <location>
        <position position="76"/>
    </location>
    <ligand>
        <name>Ca(2+)</name>
        <dbReference type="ChEBI" id="CHEBI:29108"/>
    </ligand>
</feature>
<feature type="disulfide bond" evidence="1">
    <location>
        <begin position="38"/>
        <end position="104"/>
    </location>
</feature>
<feature type="disulfide bond" evidence="1">
    <location>
        <begin position="54"/>
        <end position="151"/>
    </location>
</feature>
<feature type="disulfide bond" evidence="1">
    <location>
        <begin position="56"/>
        <end position="72"/>
    </location>
</feature>
<feature type="disulfide bond" evidence="1">
    <location>
        <begin position="71"/>
        <end position="132"/>
    </location>
</feature>
<feature type="disulfide bond" evidence="1">
    <location>
        <begin position="78"/>
        <end position="125"/>
    </location>
</feature>
<feature type="disulfide bond" evidence="1">
    <location>
        <begin position="88"/>
        <end position="118"/>
    </location>
</feature>
<feature type="disulfide bond" evidence="1">
    <location>
        <begin position="111"/>
        <end position="123"/>
    </location>
</feature>
<sequence>MYPAHLLVLLAVCVSLLGAASIPARPLNLYQFGNMIQCANHGRRPTWHYMDYGCYCGKGGSGTPVDELDRCCQTHDDCYGEAEKLPACNYMMSGPYYNTYSYECNDGELTCKDNNDECKAFICNCDRTAAICFARTPYNDANWNINTKTSC</sequence>
<dbReference type="EC" id="3.1.1.4"/>
<dbReference type="EMBL" id="DQ085840">
    <property type="protein sequence ID" value="AAZ22658.1"/>
    <property type="molecule type" value="mRNA"/>
</dbReference>
<dbReference type="SMR" id="Q45Z26"/>
<dbReference type="GO" id="GO:0005576">
    <property type="term" value="C:extracellular region"/>
    <property type="evidence" value="ECO:0007669"/>
    <property type="project" value="UniProtKB-SubCell"/>
</dbReference>
<dbReference type="GO" id="GO:0005509">
    <property type="term" value="F:calcium ion binding"/>
    <property type="evidence" value="ECO:0007669"/>
    <property type="project" value="InterPro"/>
</dbReference>
<dbReference type="GO" id="GO:0047498">
    <property type="term" value="F:calcium-dependent phospholipase A2 activity"/>
    <property type="evidence" value="ECO:0007669"/>
    <property type="project" value="TreeGrafter"/>
</dbReference>
<dbReference type="GO" id="GO:0005543">
    <property type="term" value="F:phospholipid binding"/>
    <property type="evidence" value="ECO:0007669"/>
    <property type="project" value="TreeGrafter"/>
</dbReference>
<dbReference type="GO" id="GO:0005102">
    <property type="term" value="F:signaling receptor binding"/>
    <property type="evidence" value="ECO:0007669"/>
    <property type="project" value="TreeGrafter"/>
</dbReference>
<dbReference type="GO" id="GO:0090729">
    <property type="term" value="F:toxin activity"/>
    <property type="evidence" value="ECO:0007669"/>
    <property type="project" value="UniProtKB-KW"/>
</dbReference>
<dbReference type="GO" id="GO:0050482">
    <property type="term" value="P:arachidonate secretion"/>
    <property type="evidence" value="ECO:0007669"/>
    <property type="project" value="InterPro"/>
</dbReference>
<dbReference type="GO" id="GO:0006633">
    <property type="term" value="P:fatty acid biosynthetic process"/>
    <property type="evidence" value="ECO:0007669"/>
    <property type="project" value="TreeGrafter"/>
</dbReference>
<dbReference type="GO" id="GO:0016042">
    <property type="term" value="P:lipid catabolic process"/>
    <property type="evidence" value="ECO:0007669"/>
    <property type="project" value="UniProtKB-KW"/>
</dbReference>
<dbReference type="GO" id="GO:0006644">
    <property type="term" value="P:phospholipid metabolic process"/>
    <property type="evidence" value="ECO:0007669"/>
    <property type="project" value="InterPro"/>
</dbReference>
<dbReference type="GO" id="GO:0048146">
    <property type="term" value="P:positive regulation of fibroblast proliferation"/>
    <property type="evidence" value="ECO:0007669"/>
    <property type="project" value="TreeGrafter"/>
</dbReference>
<dbReference type="CDD" id="cd00125">
    <property type="entry name" value="PLA2c"/>
    <property type="match status" value="1"/>
</dbReference>
<dbReference type="FunFam" id="1.20.90.10:FF:000007">
    <property type="entry name" value="Acidic phospholipase A2"/>
    <property type="match status" value="1"/>
</dbReference>
<dbReference type="Gene3D" id="1.20.90.10">
    <property type="entry name" value="Phospholipase A2 domain"/>
    <property type="match status" value="1"/>
</dbReference>
<dbReference type="InterPro" id="IPR001211">
    <property type="entry name" value="PLipase_A2"/>
</dbReference>
<dbReference type="InterPro" id="IPR033112">
    <property type="entry name" value="PLipase_A2_Asp_AS"/>
</dbReference>
<dbReference type="InterPro" id="IPR016090">
    <property type="entry name" value="PLipase_A2_dom"/>
</dbReference>
<dbReference type="InterPro" id="IPR036444">
    <property type="entry name" value="PLipase_A2_dom_sf"/>
</dbReference>
<dbReference type="InterPro" id="IPR033113">
    <property type="entry name" value="PLipase_A2_His_AS"/>
</dbReference>
<dbReference type="PANTHER" id="PTHR11716:SF94">
    <property type="entry name" value="PHOSPHOLIPASE A2"/>
    <property type="match status" value="1"/>
</dbReference>
<dbReference type="PANTHER" id="PTHR11716">
    <property type="entry name" value="PHOSPHOLIPASE A2 FAMILY MEMBER"/>
    <property type="match status" value="1"/>
</dbReference>
<dbReference type="Pfam" id="PF00068">
    <property type="entry name" value="Phospholip_A2_1"/>
    <property type="match status" value="1"/>
</dbReference>
<dbReference type="PRINTS" id="PR00389">
    <property type="entry name" value="PHPHLIPASEA2"/>
</dbReference>
<dbReference type="SMART" id="SM00085">
    <property type="entry name" value="PA2c"/>
    <property type="match status" value="1"/>
</dbReference>
<dbReference type="SUPFAM" id="SSF48619">
    <property type="entry name" value="Phospholipase A2, PLA2"/>
    <property type="match status" value="1"/>
</dbReference>
<dbReference type="PROSITE" id="PS00119">
    <property type="entry name" value="PA2_ASP"/>
    <property type="match status" value="1"/>
</dbReference>
<dbReference type="PROSITE" id="PS00118">
    <property type="entry name" value="PA2_HIS"/>
    <property type="match status" value="1"/>
</dbReference>
<proteinExistence type="evidence at transcript level"/>
<keyword id="KW-0106">Calcium</keyword>
<keyword id="KW-1015">Disulfide bond</keyword>
<keyword id="KW-0378">Hydrolase</keyword>
<keyword id="KW-0442">Lipid degradation</keyword>
<keyword id="KW-0443">Lipid metabolism</keyword>
<keyword id="KW-0479">Metal-binding</keyword>
<keyword id="KW-0964">Secreted</keyword>
<keyword id="KW-0732">Signal</keyword>
<keyword id="KW-0800">Toxin</keyword>
<reference key="1">
    <citation type="journal article" date="2005" name="Cell. Mol. Life Sci.">
        <title>Identification and analysis of venom gland-specific genes from the coastal taipan (Oxyuranus scutellatus) and related species.</title>
        <authorList>
            <person name="St Pierre L."/>
            <person name="Woods R."/>
            <person name="Earl S.T.H."/>
            <person name="Masci P.P."/>
            <person name="Lavin M.F."/>
        </authorList>
    </citation>
    <scope>NUCLEOTIDE SEQUENCE [MRNA]</scope>
    <source>
        <tissue>Venom gland</tissue>
    </source>
</reference>
<protein>
    <recommendedName>
        <fullName>Acidic phospholipase A2 5</fullName>
        <shortName>svPLA2</shortName>
        <ecNumber>3.1.1.4</ecNumber>
    </recommendedName>
    <alternativeName>
        <fullName>Phosphatidylcholine 2-acylhydrolase 5</fullName>
        <shortName>PLA-5</shortName>
    </alternativeName>
</protein>
<comment type="function">
    <text>PLA2 catalyzes the calcium-dependent hydrolysis of the 2-acyl groups in 3-sn-phosphoglycerides.</text>
</comment>
<comment type="catalytic activity">
    <reaction evidence="3 4">
        <text>a 1,2-diacyl-sn-glycero-3-phosphocholine + H2O = a 1-acyl-sn-glycero-3-phosphocholine + a fatty acid + H(+)</text>
        <dbReference type="Rhea" id="RHEA:15801"/>
        <dbReference type="ChEBI" id="CHEBI:15377"/>
        <dbReference type="ChEBI" id="CHEBI:15378"/>
        <dbReference type="ChEBI" id="CHEBI:28868"/>
        <dbReference type="ChEBI" id="CHEBI:57643"/>
        <dbReference type="ChEBI" id="CHEBI:58168"/>
        <dbReference type="EC" id="3.1.1.4"/>
    </reaction>
</comment>
<comment type="cofactor">
    <cofactor evidence="1">
        <name>Ca(2+)</name>
        <dbReference type="ChEBI" id="CHEBI:29108"/>
    </cofactor>
    <text evidence="1">Binds 1 Ca(2+) ion.</text>
</comment>
<comment type="subcellular location">
    <subcellularLocation>
        <location>Secreted</location>
    </subcellularLocation>
</comment>
<comment type="tissue specificity">
    <text>Expressed by the venom gland.</text>
</comment>
<comment type="similarity">
    <text evidence="5">Belongs to the phospholipase A2 family. Group I subfamily. D49 sub-subfamily.</text>
</comment>
<evidence type="ECO:0000250" key="1"/>
<evidence type="ECO:0000255" key="2"/>
<evidence type="ECO:0000255" key="3">
    <source>
        <dbReference type="PROSITE-ProRule" id="PRU10035"/>
    </source>
</evidence>
<evidence type="ECO:0000255" key="4">
    <source>
        <dbReference type="PROSITE-ProRule" id="PRU10036"/>
    </source>
</evidence>
<evidence type="ECO:0000305" key="5"/>
<name>PA2A5_TROCA</name>